<comment type="function">
    <text evidence="1">Involved in biosynthesis of the thiamine precursor thiazole. Catalyzes the conversion of NAD and glycine to adenosine diphosphate 5-(2-hydroxyethyl)-4-methylthiazole-2-carboxylic acid (ADT), an adenylated thiazole intermediate. The reaction includes an iron-dependent sulfide transfer from a conserved cysteine residue of the protein to a thiazole intermediate. The enzyme can only undergo a single turnover, which suggests it is a suicide enzyme. May have additional roles in adaptation to various stress conditions and in DNA damage tolerance.</text>
</comment>
<comment type="catalytic activity">
    <reaction evidence="1">
        <text>[ADP-thiazole synthase]-L-cysteine + glycine + NAD(+) = [ADP-thiazole synthase]-dehydroalanine + ADP-5-ethyl-4-methylthiazole-2-carboxylate + nicotinamide + 3 H2O + 2 H(+)</text>
        <dbReference type="Rhea" id="RHEA:55708"/>
        <dbReference type="Rhea" id="RHEA-COMP:14264"/>
        <dbReference type="Rhea" id="RHEA-COMP:14265"/>
        <dbReference type="ChEBI" id="CHEBI:15377"/>
        <dbReference type="ChEBI" id="CHEBI:15378"/>
        <dbReference type="ChEBI" id="CHEBI:17154"/>
        <dbReference type="ChEBI" id="CHEBI:29950"/>
        <dbReference type="ChEBI" id="CHEBI:57305"/>
        <dbReference type="ChEBI" id="CHEBI:57540"/>
        <dbReference type="ChEBI" id="CHEBI:90873"/>
        <dbReference type="ChEBI" id="CHEBI:139151"/>
        <dbReference type="EC" id="2.4.2.60"/>
    </reaction>
</comment>
<comment type="cofactor">
    <cofactor evidence="1">
        <name>Fe cation</name>
        <dbReference type="ChEBI" id="CHEBI:24875"/>
    </cofactor>
    <text evidence="1">Binds 1 Fe cation per subunit.</text>
</comment>
<comment type="subunit">
    <text evidence="1">Homooctamer.</text>
</comment>
<comment type="subcellular location">
    <subcellularLocation>
        <location evidence="1">Plastid</location>
        <location evidence="1">Chloroplast</location>
    </subcellularLocation>
</comment>
<comment type="PTM">
    <text evidence="1">During the catalytic reaction, a sulfide is transferred from Cys-233 to a reaction intermediate, generating a dehydroalanine residue.</text>
</comment>
<comment type="miscellaneous">
    <text evidence="1">This protein may be expected to contain an N-terminal transit peptide but none has been predicted.</text>
</comment>
<comment type="similarity">
    <text evidence="1">Belongs to the THI4 family.</text>
</comment>
<protein>
    <recommendedName>
        <fullName evidence="1">Thiamine thiazole synthase, chloroplastic</fullName>
        <ecNumber evidence="1">2.4.2.60</ecNumber>
    </recommendedName>
    <alternativeName>
        <fullName evidence="1">Thiazole biosynthetic enzyme</fullName>
    </alternativeName>
</protein>
<keyword id="KW-0150">Chloroplast</keyword>
<keyword id="KW-0408">Iron</keyword>
<keyword id="KW-0479">Metal-binding</keyword>
<keyword id="KW-0520">NAD</keyword>
<keyword id="KW-0934">Plastid</keyword>
<keyword id="KW-0784">Thiamine biosynthesis</keyword>
<keyword id="KW-0808">Transferase</keyword>
<reference key="1">
    <citation type="journal article" date="2007" name="Science">
        <title>The Chlamydomonas genome reveals the evolution of key animal and plant functions.</title>
        <authorList>
            <person name="Merchant S.S."/>
            <person name="Prochnik S.E."/>
            <person name="Vallon O."/>
            <person name="Harris E.H."/>
            <person name="Karpowicz S.J."/>
            <person name="Witman G.B."/>
            <person name="Terry A."/>
            <person name="Salamov A."/>
            <person name="Fritz-Laylin L.K."/>
            <person name="Marechal-Drouard L."/>
            <person name="Marshall W.F."/>
            <person name="Qu L.H."/>
            <person name="Nelson D.R."/>
            <person name="Sanderfoot A.A."/>
            <person name="Spalding M.H."/>
            <person name="Kapitonov V.V."/>
            <person name="Ren Q."/>
            <person name="Ferris P."/>
            <person name="Lindquist E."/>
            <person name="Shapiro H."/>
            <person name="Lucas S.M."/>
            <person name="Grimwood J."/>
            <person name="Schmutz J."/>
            <person name="Cardol P."/>
            <person name="Cerutti H."/>
            <person name="Chanfreau G."/>
            <person name="Chen C.L."/>
            <person name="Cognat V."/>
            <person name="Croft M.T."/>
            <person name="Dent R."/>
            <person name="Dutcher S."/>
            <person name="Fernandez E."/>
            <person name="Fukuzawa H."/>
            <person name="Gonzalez-Ballester D."/>
            <person name="Gonzalez-Halphen D."/>
            <person name="Hallmann A."/>
            <person name="Hanikenne M."/>
            <person name="Hippler M."/>
            <person name="Inwood W."/>
            <person name="Jabbari K."/>
            <person name="Kalanon M."/>
            <person name="Kuras R."/>
            <person name="Lefebvre P.A."/>
            <person name="Lemaire S.D."/>
            <person name="Lobanov A.V."/>
            <person name="Lohr M."/>
            <person name="Manuell A."/>
            <person name="Meier I."/>
            <person name="Mets L."/>
            <person name="Mittag M."/>
            <person name="Mittelmeier T."/>
            <person name="Moroney J.V."/>
            <person name="Moseley J."/>
            <person name="Napoli C."/>
            <person name="Nedelcu A.M."/>
            <person name="Niyogi K."/>
            <person name="Novoselov S.V."/>
            <person name="Paulsen I.T."/>
            <person name="Pazour G.J."/>
            <person name="Purton S."/>
            <person name="Ral J.P."/>
            <person name="Riano-Pachon D.M."/>
            <person name="Riekhof W."/>
            <person name="Rymarquis L."/>
            <person name="Schroda M."/>
            <person name="Stern D."/>
            <person name="Umen J."/>
            <person name="Willows R."/>
            <person name="Wilson N."/>
            <person name="Zimmer S.L."/>
            <person name="Allmer J."/>
            <person name="Balk J."/>
            <person name="Bisova K."/>
            <person name="Chen C.J."/>
            <person name="Elias M."/>
            <person name="Gendler K."/>
            <person name="Hauser C."/>
            <person name="Lamb M.R."/>
            <person name="Ledford H."/>
            <person name="Long J.C."/>
            <person name="Minagawa J."/>
            <person name="Page M.D."/>
            <person name="Pan J."/>
            <person name="Pootakham W."/>
            <person name="Roje S."/>
            <person name="Rose A."/>
            <person name="Stahlberg E."/>
            <person name="Terauchi A.M."/>
            <person name="Yang P."/>
            <person name="Ball S."/>
            <person name="Bowler C."/>
            <person name="Dieckmann C.L."/>
            <person name="Gladyshev V.N."/>
            <person name="Green P."/>
            <person name="Jorgensen R."/>
            <person name="Mayfield S."/>
            <person name="Mueller-Roeber B."/>
            <person name="Rajamani S."/>
            <person name="Sayre R.T."/>
            <person name="Brokstein P."/>
            <person name="Dubchak I."/>
            <person name="Goodstein D."/>
            <person name="Hornick L."/>
            <person name="Huang Y.W."/>
            <person name="Jhaveri J."/>
            <person name="Luo Y."/>
            <person name="Martinez D."/>
            <person name="Ngau W.C."/>
            <person name="Otillar B."/>
            <person name="Poliakov A."/>
            <person name="Porter A."/>
            <person name="Szajkowski L."/>
            <person name="Werner G."/>
            <person name="Zhou K."/>
            <person name="Grigoriev I.V."/>
            <person name="Rokhsar D.S."/>
            <person name="Grossman A.R."/>
        </authorList>
    </citation>
    <scope>NUCLEOTIDE SEQUENCE [LARGE SCALE GENOMIC DNA]</scope>
    <source>
        <strain>CC-503</strain>
    </source>
</reference>
<proteinExistence type="inferred from homology"/>
<evidence type="ECO:0000255" key="1">
    <source>
        <dbReference type="HAMAP-Rule" id="MF_03158"/>
    </source>
</evidence>
<gene>
    <name evidence="1" type="primary">THI1</name>
    <name type="ORF">CHLREDRAFT_196899</name>
</gene>
<organism>
    <name type="scientific">Chlamydomonas reinhardtii</name>
    <name type="common">Chlamydomonas smithii</name>
    <dbReference type="NCBI Taxonomy" id="3055"/>
    <lineage>
        <taxon>Eukaryota</taxon>
        <taxon>Viridiplantae</taxon>
        <taxon>Chlorophyta</taxon>
        <taxon>core chlorophytes</taxon>
        <taxon>Chlorophyceae</taxon>
        <taxon>CS clade</taxon>
        <taxon>Chlamydomonadales</taxon>
        <taxon>Chlamydomonadaceae</taxon>
        <taxon>Chlamydomonas</taxon>
    </lineage>
</organism>
<accession>A8J9T5</accession>
<dbReference type="EC" id="2.4.2.60" evidence="1"/>
<dbReference type="EMBL" id="DS496147">
    <property type="protein sequence ID" value="EDO99354.1"/>
    <property type="molecule type" value="Genomic_DNA"/>
</dbReference>
<dbReference type="RefSeq" id="XP_001698672.1">
    <property type="nucleotide sequence ID" value="XM_001698620.1"/>
</dbReference>
<dbReference type="SMR" id="A8J9T5"/>
<dbReference type="PaxDb" id="3055-EDO99354"/>
<dbReference type="ProMEX" id="A8J9T5"/>
<dbReference type="EnsemblPlants" id="PNW83958">
    <property type="protein sequence ID" value="PNW83958"/>
    <property type="gene ID" value="CHLRE_04g214150v5"/>
</dbReference>
<dbReference type="GeneID" id="5724279"/>
<dbReference type="Gramene" id="PNW83958">
    <property type="protein sequence ID" value="PNW83958"/>
    <property type="gene ID" value="CHLRE_04g214150v5"/>
</dbReference>
<dbReference type="KEGG" id="cre:CHLRE_04g214150v5"/>
<dbReference type="eggNOG" id="KOG2960">
    <property type="taxonomic scope" value="Eukaryota"/>
</dbReference>
<dbReference type="HOGENOM" id="CLU_053727_0_0_1"/>
<dbReference type="OrthoDB" id="410463at2759"/>
<dbReference type="GO" id="GO:0009570">
    <property type="term" value="C:chloroplast stroma"/>
    <property type="evidence" value="ECO:0007669"/>
    <property type="project" value="UniProtKB-UniRule"/>
</dbReference>
<dbReference type="GO" id="GO:0005829">
    <property type="term" value="C:cytosol"/>
    <property type="evidence" value="ECO:0007669"/>
    <property type="project" value="UniProtKB-UniRule"/>
</dbReference>
<dbReference type="GO" id="GO:0160205">
    <property type="term" value="F:cysteine-dependent adenosine diphosphate thiazole synthase activity"/>
    <property type="evidence" value="ECO:0007669"/>
    <property type="project" value="UniProtKB-EC"/>
</dbReference>
<dbReference type="GO" id="GO:0005506">
    <property type="term" value="F:iron ion binding"/>
    <property type="evidence" value="ECO:0007669"/>
    <property type="project" value="UniProtKB-UniRule"/>
</dbReference>
<dbReference type="GO" id="GO:0009228">
    <property type="term" value="P:thiamine biosynthetic process"/>
    <property type="evidence" value="ECO:0007669"/>
    <property type="project" value="UniProtKB-UniRule"/>
</dbReference>
<dbReference type="GO" id="GO:0052837">
    <property type="term" value="P:thiazole biosynthetic process"/>
    <property type="evidence" value="ECO:0007669"/>
    <property type="project" value="UniProtKB-UniRule"/>
</dbReference>
<dbReference type="Gene3D" id="6.10.250.2840">
    <property type="match status" value="1"/>
</dbReference>
<dbReference type="Gene3D" id="3.50.50.60">
    <property type="entry name" value="FAD/NAD(P)-binding domain"/>
    <property type="match status" value="1"/>
</dbReference>
<dbReference type="HAMAP" id="MF_03158">
    <property type="entry name" value="THI4"/>
    <property type="match status" value="1"/>
</dbReference>
<dbReference type="InterPro" id="IPR036188">
    <property type="entry name" value="FAD/NAD-bd_sf"/>
</dbReference>
<dbReference type="InterPro" id="IPR027495">
    <property type="entry name" value="Sti35"/>
</dbReference>
<dbReference type="InterPro" id="IPR002922">
    <property type="entry name" value="Thi4_fam"/>
</dbReference>
<dbReference type="NCBIfam" id="TIGR00292">
    <property type="entry name" value="sulfide-dependent adenosine diphosphate thiazole synthase"/>
    <property type="match status" value="1"/>
</dbReference>
<dbReference type="PANTHER" id="PTHR43422">
    <property type="entry name" value="THIAMINE THIAZOLE SYNTHASE"/>
    <property type="match status" value="1"/>
</dbReference>
<dbReference type="PANTHER" id="PTHR43422:SF3">
    <property type="entry name" value="THIAMINE THIAZOLE SYNTHASE"/>
    <property type="match status" value="1"/>
</dbReference>
<dbReference type="Pfam" id="PF01946">
    <property type="entry name" value="Thi4"/>
    <property type="match status" value="1"/>
</dbReference>
<dbReference type="SUPFAM" id="SSF51905">
    <property type="entry name" value="FAD/NAD(P)-binding domain"/>
    <property type="match status" value="1"/>
</dbReference>
<name>THI4_CHLRE</name>
<sequence length="357" mass="36893">MAIKMNLASSKVGAKASAKSVRGARLVARVAQPMSPSSAATAAADASMLARAGLPPTTTPYDDYKFAPIREAEVNRAMTRRYFKDMDEFAESDVVIVGAGSAGLACAFELGRIAPHLKVALMEQSVAPGGGAWLGGQLFSAMVVRKPAHEMLDALQVPYEDEGHYVVVRHAALLTSTLMSHVLKNPNVKLFNATAVEDLIVKPDPALGPGGRRVAGVVTNWSLVAQAHGTQSCMDPNVIEAGVVVSACGHDGPFGATGVKRLARLGMVPGGEVPGMGALDMEAAEGSIVNNTREVVPGMVLTGMELAEVDGSPRMGPTFGAMIVSGMRAAHMAVAALERRRALSAAAAEGAAAEAQA</sequence>
<feature type="chain" id="PRO_0000415860" description="Thiamine thiazole synthase, chloroplastic">
    <location>
        <begin position="1"/>
        <end position="357"/>
    </location>
</feature>
<feature type="binding site" evidence="1">
    <location>
        <position position="102"/>
    </location>
    <ligand>
        <name>substrate</name>
    </ligand>
</feature>
<feature type="binding site" evidence="1">
    <location>
        <begin position="123"/>
        <end position="124"/>
    </location>
    <ligand>
        <name>substrate</name>
    </ligand>
</feature>
<feature type="binding site" evidence="1">
    <location>
        <position position="131"/>
    </location>
    <ligand>
        <name>substrate</name>
    </ligand>
</feature>
<feature type="binding site" evidence="1">
    <location>
        <position position="196"/>
    </location>
    <ligand>
        <name>substrate</name>
    </ligand>
</feature>
<feature type="binding site" evidence="1">
    <location>
        <position position="235"/>
    </location>
    <ligand>
        <name>substrate</name>
    </ligand>
</feature>
<feature type="binding site" evidence="1">
    <location>
        <position position="250"/>
    </location>
    <ligand>
        <name>substrate</name>
    </ligand>
</feature>
<feature type="binding site" evidence="1">
    <location>
        <position position="304"/>
    </location>
    <ligand>
        <name>substrate</name>
    </ligand>
</feature>
<feature type="binding site" evidence="1">
    <location>
        <begin position="314"/>
        <end position="316"/>
    </location>
    <ligand>
        <name>substrate</name>
    </ligand>
</feature>
<feature type="modified residue" description="2,3-didehydroalanine (Cys)" evidence="1">
    <location>
        <position position="233"/>
    </location>
</feature>